<comment type="domain">
    <text>The protein kinase domain is predicted to be catalytically inactive.</text>
</comment>
<comment type="similarity">
    <text evidence="4">Belongs to the protein kinase superfamily. Ser/Thr protein kinase family.</text>
</comment>
<organism>
    <name type="scientific">Dictyostelium discoideum</name>
    <name type="common">Social amoeba</name>
    <dbReference type="NCBI Taxonomy" id="44689"/>
    <lineage>
        <taxon>Eukaryota</taxon>
        <taxon>Amoebozoa</taxon>
        <taxon>Evosea</taxon>
        <taxon>Eumycetozoa</taxon>
        <taxon>Dictyostelia</taxon>
        <taxon>Dictyosteliales</taxon>
        <taxon>Dictyosteliaceae</taxon>
        <taxon>Dictyostelium</taxon>
    </lineage>
</organism>
<name>SLOB1_DICDI</name>
<sequence>MDSSTANSSGTAISKAEWKPDQSSLECNDCQLPFTLIRRRHHCRKCGSIFCDSCSSFYSILPIEYGYTGQQRLCRSCNNSFEQKKQYFETDALVAQFQLRSTAQFEYSKPLQDIGHTKHGLRKSYCMAKNSMGGGEECVVSIITPTPSSCPWSMSNEKKKRKFEKTLLSLKHPYILTPINVEVSGANDKILVIRTFFKQGSLRDQVYKSKPLSPYDTKYIYKQPKSSSSSSSSSSSSSQSQSVLPIKSIQKYCKQILESLLYLKSKGIQFSHLHLSNILINQSNDTCQLVDIENCLLGMKPLFNDYIYGIGLPQSFKDNLEVICFGHCLFEMIIGIPLGDHSNINSFIPLFPDKVFLLLQQIFSEKTPTLEELVKNPWFEVTTTIEQQSLQNGKLKKSQLTFIKDNSNKFESPKVSLSGSFSSSNISKLSSSSSNNNSNNNNNNNNNSNTFNNISSNDDKRKSMKLPSSTSLLNNSFNLSNNNNPSSPSTSTISPNSSLISSPPKTPILQTFTPPPPPPPPKSAPPPPPPPSSSKLPPSSSSRNSLLESIRNADNAKKLKKTTPNTKPKSSIGPHSLKPSSTKKK</sequence>
<proteinExistence type="inferred from homology"/>
<keyword id="KW-0009">Actin-binding</keyword>
<keyword id="KW-0479">Metal-binding</keyword>
<keyword id="KW-1185">Reference proteome</keyword>
<keyword id="KW-0862">Zinc</keyword>
<keyword id="KW-0863">Zinc-finger</keyword>
<evidence type="ECO:0000255" key="1">
    <source>
        <dbReference type="PROSITE-ProRule" id="PRU00091"/>
    </source>
</evidence>
<evidence type="ECO:0000255" key="2">
    <source>
        <dbReference type="PROSITE-ProRule" id="PRU00406"/>
    </source>
</evidence>
<evidence type="ECO:0000256" key="3">
    <source>
        <dbReference type="SAM" id="MobiDB-lite"/>
    </source>
</evidence>
<evidence type="ECO:0000305" key="4"/>
<feature type="chain" id="PRO_0000362072" description="Probable inactive serine/threonine-protein kinase slob1">
    <location>
        <begin position="1"/>
        <end position="585"/>
    </location>
</feature>
<feature type="domain" description="Protein kinase">
    <location>
        <begin position="108"/>
        <end position="478"/>
    </location>
</feature>
<feature type="domain" description="WH2" evidence="2">
    <location>
        <begin position="542"/>
        <end position="562"/>
    </location>
</feature>
<feature type="zinc finger region" description="FYVE-type" evidence="1">
    <location>
        <begin position="21"/>
        <end position="82"/>
    </location>
</feature>
<feature type="region of interest" description="Disordered" evidence="3">
    <location>
        <begin position="426"/>
        <end position="585"/>
    </location>
</feature>
<feature type="compositionally biased region" description="Low complexity" evidence="3">
    <location>
        <begin position="426"/>
        <end position="456"/>
    </location>
</feature>
<feature type="compositionally biased region" description="Low complexity" evidence="3">
    <location>
        <begin position="466"/>
        <end position="503"/>
    </location>
</feature>
<feature type="compositionally biased region" description="Pro residues" evidence="3">
    <location>
        <begin position="513"/>
        <end position="532"/>
    </location>
</feature>
<feature type="compositionally biased region" description="Low complexity" evidence="3">
    <location>
        <begin position="533"/>
        <end position="542"/>
    </location>
</feature>
<feature type="binding site" evidence="1">
    <location>
        <position position="27"/>
    </location>
    <ligand>
        <name>Zn(2+)</name>
        <dbReference type="ChEBI" id="CHEBI:29105"/>
        <label>1</label>
    </ligand>
</feature>
<feature type="binding site" evidence="1">
    <location>
        <position position="30"/>
    </location>
    <ligand>
        <name>Zn(2+)</name>
        <dbReference type="ChEBI" id="CHEBI:29105"/>
        <label>1</label>
    </ligand>
</feature>
<feature type="binding site" evidence="1">
    <location>
        <position position="43"/>
    </location>
    <ligand>
        <name>Zn(2+)</name>
        <dbReference type="ChEBI" id="CHEBI:29105"/>
        <label>2</label>
    </ligand>
</feature>
<feature type="binding site" evidence="1">
    <location>
        <position position="46"/>
    </location>
    <ligand>
        <name>Zn(2+)</name>
        <dbReference type="ChEBI" id="CHEBI:29105"/>
        <label>2</label>
    </ligand>
</feature>
<feature type="binding site" evidence="1">
    <location>
        <position position="51"/>
    </location>
    <ligand>
        <name>Zn(2+)</name>
        <dbReference type="ChEBI" id="CHEBI:29105"/>
        <label>1</label>
    </ligand>
</feature>
<feature type="binding site" evidence="1">
    <location>
        <position position="54"/>
    </location>
    <ligand>
        <name>Zn(2+)</name>
        <dbReference type="ChEBI" id="CHEBI:29105"/>
        <label>1</label>
    </ligand>
</feature>
<feature type="binding site" evidence="1">
    <location>
        <position position="74"/>
    </location>
    <ligand>
        <name>Zn(2+)</name>
        <dbReference type="ChEBI" id="CHEBI:29105"/>
        <label>2</label>
    </ligand>
</feature>
<feature type="binding site" evidence="1">
    <location>
        <position position="77"/>
    </location>
    <ligand>
        <name>Zn(2+)</name>
        <dbReference type="ChEBI" id="CHEBI:29105"/>
        <label>2</label>
    </ligand>
</feature>
<reference key="1">
    <citation type="journal article" date="2005" name="Nature">
        <title>The genome of the social amoeba Dictyostelium discoideum.</title>
        <authorList>
            <person name="Eichinger L."/>
            <person name="Pachebat J.A."/>
            <person name="Gloeckner G."/>
            <person name="Rajandream M.A."/>
            <person name="Sucgang R."/>
            <person name="Berriman M."/>
            <person name="Song J."/>
            <person name="Olsen R."/>
            <person name="Szafranski K."/>
            <person name="Xu Q."/>
            <person name="Tunggal B."/>
            <person name="Kummerfeld S."/>
            <person name="Madera M."/>
            <person name="Konfortov B.A."/>
            <person name="Rivero F."/>
            <person name="Bankier A.T."/>
            <person name="Lehmann R."/>
            <person name="Hamlin N."/>
            <person name="Davies R."/>
            <person name="Gaudet P."/>
            <person name="Fey P."/>
            <person name="Pilcher K."/>
            <person name="Chen G."/>
            <person name="Saunders D."/>
            <person name="Sodergren E.J."/>
            <person name="Davis P."/>
            <person name="Kerhornou A."/>
            <person name="Nie X."/>
            <person name="Hall N."/>
            <person name="Anjard C."/>
            <person name="Hemphill L."/>
            <person name="Bason N."/>
            <person name="Farbrother P."/>
            <person name="Desany B."/>
            <person name="Just E."/>
            <person name="Morio T."/>
            <person name="Rost R."/>
            <person name="Churcher C.M."/>
            <person name="Cooper J."/>
            <person name="Haydock S."/>
            <person name="van Driessche N."/>
            <person name="Cronin A."/>
            <person name="Goodhead I."/>
            <person name="Muzny D.M."/>
            <person name="Mourier T."/>
            <person name="Pain A."/>
            <person name="Lu M."/>
            <person name="Harper D."/>
            <person name="Lindsay R."/>
            <person name="Hauser H."/>
            <person name="James K.D."/>
            <person name="Quiles M."/>
            <person name="Madan Babu M."/>
            <person name="Saito T."/>
            <person name="Buchrieser C."/>
            <person name="Wardroper A."/>
            <person name="Felder M."/>
            <person name="Thangavelu M."/>
            <person name="Johnson D."/>
            <person name="Knights A."/>
            <person name="Loulseged H."/>
            <person name="Mungall K.L."/>
            <person name="Oliver K."/>
            <person name="Price C."/>
            <person name="Quail M.A."/>
            <person name="Urushihara H."/>
            <person name="Hernandez J."/>
            <person name="Rabbinowitsch E."/>
            <person name="Steffen D."/>
            <person name="Sanders M."/>
            <person name="Ma J."/>
            <person name="Kohara Y."/>
            <person name="Sharp S."/>
            <person name="Simmonds M.N."/>
            <person name="Spiegler S."/>
            <person name="Tivey A."/>
            <person name="Sugano S."/>
            <person name="White B."/>
            <person name="Walker D."/>
            <person name="Woodward J.R."/>
            <person name="Winckler T."/>
            <person name="Tanaka Y."/>
            <person name="Shaulsky G."/>
            <person name="Schleicher M."/>
            <person name="Weinstock G.M."/>
            <person name="Rosenthal A."/>
            <person name="Cox E.C."/>
            <person name="Chisholm R.L."/>
            <person name="Gibbs R.A."/>
            <person name="Loomis W.F."/>
            <person name="Platzer M."/>
            <person name="Kay R.R."/>
            <person name="Williams J.G."/>
            <person name="Dear P.H."/>
            <person name="Noegel A.A."/>
            <person name="Barrell B.G."/>
            <person name="Kuspa A."/>
        </authorList>
    </citation>
    <scope>NUCLEOTIDE SEQUENCE [LARGE SCALE GENOMIC DNA]</scope>
    <source>
        <strain>AX4</strain>
    </source>
</reference>
<protein>
    <recommendedName>
        <fullName>Probable inactive serine/threonine-protein kinase slob1</fullName>
    </recommendedName>
    <alternativeName>
        <fullName>Slowpoke-binding protein 1</fullName>
    </alternativeName>
</protein>
<accession>Q54TC3</accession>
<gene>
    <name type="primary">slob1</name>
    <name type="ORF">DDB_G0281863</name>
</gene>
<dbReference type="EMBL" id="AAFI02000043">
    <property type="protein sequence ID" value="EAL66491.1"/>
    <property type="molecule type" value="Genomic_DNA"/>
</dbReference>
<dbReference type="RefSeq" id="XP_640466.1">
    <property type="nucleotide sequence ID" value="XM_635374.1"/>
</dbReference>
<dbReference type="SMR" id="Q54TC3"/>
<dbReference type="GlyGen" id="Q54TC3">
    <property type="glycosylation" value="1 site"/>
</dbReference>
<dbReference type="PaxDb" id="44689-DDB0229842"/>
<dbReference type="EnsemblProtists" id="EAL66491">
    <property type="protein sequence ID" value="EAL66491"/>
    <property type="gene ID" value="DDB_G0281863"/>
</dbReference>
<dbReference type="GeneID" id="8623279"/>
<dbReference type="KEGG" id="ddi:DDB_G0281863"/>
<dbReference type="dictyBase" id="DDB_G0281863">
    <property type="gene designation" value="slob1"/>
</dbReference>
<dbReference type="VEuPathDB" id="AmoebaDB:DDB_G0281863"/>
<dbReference type="eggNOG" id="KOG1819">
    <property type="taxonomic scope" value="Eukaryota"/>
</dbReference>
<dbReference type="HOGENOM" id="CLU_466485_0_0_1"/>
<dbReference type="InParanoid" id="Q54TC3"/>
<dbReference type="OMA" id="PLQDIGH"/>
<dbReference type="PhylomeDB" id="Q54TC3"/>
<dbReference type="PRO" id="PR:Q54TC3"/>
<dbReference type="Proteomes" id="UP000002195">
    <property type="component" value="Chromosome 3"/>
</dbReference>
<dbReference type="GO" id="GO:0003779">
    <property type="term" value="F:actin binding"/>
    <property type="evidence" value="ECO:0007669"/>
    <property type="project" value="UniProtKB-KW"/>
</dbReference>
<dbReference type="GO" id="GO:0004672">
    <property type="term" value="F:protein kinase activity"/>
    <property type="evidence" value="ECO:0007669"/>
    <property type="project" value="InterPro"/>
</dbReference>
<dbReference type="GO" id="GO:0008270">
    <property type="term" value="F:zinc ion binding"/>
    <property type="evidence" value="ECO:0007669"/>
    <property type="project" value="UniProtKB-KW"/>
</dbReference>
<dbReference type="Gene3D" id="1.10.510.10">
    <property type="entry name" value="Transferase(Phosphotransferase) domain 1"/>
    <property type="match status" value="1"/>
</dbReference>
<dbReference type="Gene3D" id="3.30.40.10">
    <property type="entry name" value="Zinc/RING finger domain, C3HC4 (zinc finger)"/>
    <property type="match status" value="1"/>
</dbReference>
<dbReference type="InterPro" id="IPR011009">
    <property type="entry name" value="Kinase-like_dom_sf"/>
</dbReference>
<dbReference type="InterPro" id="IPR001245">
    <property type="entry name" value="Ser-Thr/Tyr_kinase_cat_dom"/>
</dbReference>
<dbReference type="InterPro" id="IPR003124">
    <property type="entry name" value="WH2_dom"/>
</dbReference>
<dbReference type="InterPro" id="IPR000306">
    <property type="entry name" value="Znf_FYVE"/>
</dbReference>
<dbReference type="InterPro" id="IPR017455">
    <property type="entry name" value="Znf_FYVE-rel"/>
</dbReference>
<dbReference type="InterPro" id="IPR011011">
    <property type="entry name" value="Znf_FYVE_PHD"/>
</dbReference>
<dbReference type="InterPro" id="IPR013083">
    <property type="entry name" value="Znf_RING/FYVE/PHD"/>
</dbReference>
<dbReference type="PANTHER" id="PTHR23164:SF29">
    <property type="entry name" value="E3 UBIQUITIN-PROTEIN LIGASE PIB1"/>
    <property type="match status" value="1"/>
</dbReference>
<dbReference type="PANTHER" id="PTHR23164">
    <property type="entry name" value="EARLY ENDOSOME ANTIGEN 1"/>
    <property type="match status" value="1"/>
</dbReference>
<dbReference type="Pfam" id="PF01363">
    <property type="entry name" value="FYVE"/>
    <property type="match status" value="1"/>
</dbReference>
<dbReference type="Pfam" id="PF07714">
    <property type="entry name" value="PK_Tyr_Ser-Thr"/>
    <property type="match status" value="1"/>
</dbReference>
<dbReference type="SMART" id="SM00064">
    <property type="entry name" value="FYVE"/>
    <property type="match status" value="1"/>
</dbReference>
<dbReference type="SUPFAM" id="SSF57903">
    <property type="entry name" value="FYVE/PHD zinc finger"/>
    <property type="match status" value="1"/>
</dbReference>
<dbReference type="SUPFAM" id="SSF56112">
    <property type="entry name" value="Protein kinase-like (PK-like)"/>
    <property type="match status" value="1"/>
</dbReference>
<dbReference type="PROSITE" id="PS51082">
    <property type="entry name" value="WH2"/>
    <property type="match status" value="1"/>
</dbReference>
<dbReference type="PROSITE" id="PS50178">
    <property type="entry name" value="ZF_FYVE"/>
    <property type="match status" value="1"/>
</dbReference>